<evidence type="ECO:0000255" key="1">
    <source>
        <dbReference type="HAMAP-Rule" id="MF_00713"/>
    </source>
</evidence>
<evidence type="ECO:0000256" key="2">
    <source>
        <dbReference type="SAM" id="MobiDB-lite"/>
    </source>
</evidence>
<sequence>MVIFEKTRGKNSPSVMPSKKGDVSNIPTDMLRTKKPILPEQAELDVVRHYTQLSRKNFCIDTNFYPLGSCTMKYNPRAAHKYASLAGFLERHPYASAQSVQGTLECLYDLQNLIKELTGMTGVSLAPMAGAQGEFAGVAMIKAYHHKRSDFERDEIIVPDAAHGTNPATAKVCGLKVIEIPTKKDGDIDIEALDKVLGPKTAGIMLTNPSTVGVFERNIAVIAKKVHEAGGLLYYDGANLNAIMGKARPGDMGFDVLHMNLHKTFATPHGGGGPGAGPVAVNDKLKEFLPVPMVGKKDDKFVWLEEKDVSNTIGRLSAFNGNIGVLIRAYIYGAMLGGNGLTEASEIATLNANYMMARLKEEGFTIAYPDRRASHEFIVTLKPEFLNYGVTATDFAKCLIDKGVHAPTMYFPLLVPECLLIEPTETENVDSMEKFIQAMVEIRDIAKKDPQYLKGAPYNLPARRLDDVKAAKELDIVWQPK</sequence>
<protein>
    <recommendedName>
        <fullName evidence="1">Probable glycine dehydrogenase (decarboxylating) subunit 2</fullName>
        <ecNumber evidence="1">1.4.4.2</ecNumber>
    </recommendedName>
    <alternativeName>
        <fullName evidence="1">Glycine cleavage system P-protein subunit 2</fullName>
    </alternativeName>
    <alternativeName>
        <fullName evidence="1">Glycine decarboxylase subunit 2</fullName>
    </alternativeName>
    <alternativeName>
        <fullName evidence="1">Glycine dehydrogenase (aminomethyl-transferring) subunit 2</fullName>
    </alternativeName>
</protein>
<gene>
    <name evidence="1" type="primary">gcvPB</name>
    <name type="ordered locus">FTW_1663</name>
</gene>
<accession>A4IZK5</accession>
<organism>
    <name type="scientific">Francisella tularensis subsp. tularensis (strain WY96-3418)</name>
    <dbReference type="NCBI Taxonomy" id="418136"/>
    <lineage>
        <taxon>Bacteria</taxon>
        <taxon>Pseudomonadati</taxon>
        <taxon>Pseudomonadota</taxon>
        <taxon>Gammaproteobacteria</taxon>
        <taxon>Thiotrichales</taxon>
        <taxon>Francisellaceae</taxon>
        <taxon>Francisella</taxon>
    </lineage>
</organism>
<comment type="function">
    <text evidence="1">The glycine cleavage system catalyzes the degradation of glycine. The P protein binds the alpha-amino group of glycine through its pyridoxal phosphate cofactor; CO(2) is released and the remaining methylamine moiety is then transferred to the lipoamide cofactor of the H protein.</text>
</comment>
<comment type="catalytic activity">
    <reaction evidence="1">
        <text>N(6)-[(R)-lipoyl]-L-lysyl-[glycine-cleavage complex H protein] + glycine + H(+) = N(6)-[(R)-S(8)-aminomethyldihydrolipoyl]-L-lysyl-[glycine-cleavage complex H protein] + CO2</text>
        <dbReference type="Rhea" id="RHEA:24304"/>
        <dbReference type="Rhea" id="RHEA-COMP:10494"/>
        <dbReference type="Rhea" id="RHEA-COMP:10495"/>
        <dbReference type="ChEBI" id="CHEBI:15378"/>
        <dbReference type="ChEBI" id="CHEBI:16526"/>
        <dbReference type="ChEBI" id="CHEBI:57305"/>
        <dbReference type="ChEBI" id="CHEBI:83099"/>
        <dbReference type="ChEBI" id="CHEBI:83143"/>
        <dbReference type="EC" id="1.4.4.2"/>
    </reaction>
</comment>
<comment type="cofactor">
    <cofactor evidence="1">
        <name>pyridoxal 5'-phosphate</name>
        <dbReference type="ChEBI" id="CHEBI:597326"/>
    </cofactor>
</comment>
<comment type="subunit">
    <text evidence="1">The glycine cleavage system is composed of four proteins: P, T, L and H. In this organism, the P 'protein' is a heterodimer of two subunits.</text>
</comment>
<comment type="similarity">
    <text evidence="1">Belongs to the GcvP family. C-terminal subunit subfamily.</text>
</comment>
<proteinExistence type="inferred from homology"/>
<name>GCSPB_FRATW</name>
<dbReference type="EC" id="1.4.4.2" evidence="1"/>
<dbReference type="EMBL" id="CP000608">
    <property type="protein sequence ID" value="ABO47355.1"/>
    <property type="molecule type" value="Genomic_DNA"/>
</dbReference>
<dbReference type="RefSeq" id="WP_003027060.1">
    <property type="nucleotide sequence ID" value="NC_009257.1"/>
</dbReference>
<dbReference type="SMR" id="A4IZK5"/>
<dbReference type="KEGG" id="ftw:FTW_1663"/>
<dbReference type="HOGENOM" id="CLU_004620_5_0_6"/>
<dbReference type="GO" id="GO:0005829">
    <property type="term" value="C:cytosol"/>
    <property type="evidence" value="ECO:0007669"/>
    <property type="project" value="TreeGrafter"/>
</dbReference>
<dbReference type="GO" id="GO:0005960">
    <property type="term" value="C:glycine cleavage complex"/>
    <property type="evidence" value="ECO:0007669"/>
    <property type="project" value="TreeGrafter"/>
</dbReference>
<dbReference type="GO" id="GO:0016594">
    <property type="term" value="F:glycine binding"/>
    <property type="evidence" value="ECO:0007669"/>
    <property type="project" value="TreeGrafter"/>
</dbReference>
<dbReference type="GO" id="GO:0004375">
    <property type="term" value="F:glycine dehydrogenase (decarboxylating) activity"/>
    <property type="evidence" value="ECO:0007669"/>
    <property type="project" value="UniProtKB-EC"/>
</dbReference>
<dbReference type="GO" id="GO:0030170">
    <property type="term" value="F:pyridoxal phosphate binding"/>
    <property type="evidence" value="ECO:0007669"/>
    <property type="project" value="TreeGrafter"/>
</dbReference>
<dbReference type="GO" id="GO:0019464">
    <property type="term" value="P:glycine decarboxylation via glycine cleavage system"/>
    <property type="evidence" value="ECO:0007669"/>
    <property type="project" value="UniProtKB-UniRule"/>
</dbReference>
<dbReference type="FunFam" id="3.40.640.10:FF:000224">
    <property type="entry name" value="Probable glycine dehydrogenase (decarboxylating) subunit 2"/>
    <property type="match status" value="1"/>
</dbReference>
<dbReference type="Gene3D" id="6.20.440.10">
    <property type="match status" value="1"/>
</dbReference>
<dbReference type="Gene3D" id="3.90.1150.10">
    <property type="entry name" value="Aspartate Aminotransferase, domain 1"/>
    <property type="match status" value="1"/>
</dbReference>
<dbReference type="Gene3D" id="3.40.640.10">
    <property type="entry name" value="Type I PLP-dependent aspartate aminotransferase-like (Major domain)"/>
    <property type="match status" value="1"/>
</dbReference>
<dbReference type="HAMAP" id="MF_00713">
    <property type="entry name" value="GcvPB"/>
    <property type="match status" value="1"/>
</dbReference>
<dbReference type="InterPro" id="IPR023012">
    <property type="entry name" value="GcvPB"/>
</dbReference>
<dbReference type="InterPro" id="IPR049316">
    <property type="entry name" value="GDC-P_C"/>
</dbReference>
<dbReference type="InterPro" id="IPR049315">
    <property type="entry name" value="GDC-P_N"/>
</dbReference>
<dbReference type="InterPro" id="IPR020581">
    <property type="entry name" value="GDC_P"/>
</dbReference>
<dbReference type="InterPro" id="IPR015424">
    <property type="entry name" value="PyrdxlP-dep_Trfase"/>
</dbReference>
<dbReference type="InterPro" id="IPR015421">
    <property type="entry name" value="PyrdxlP-dep_Trfase_major"/>
</dbReference>
<dbReference type="InterPro" id="IPR015422">
    <property type="entry name" value="PyrdxlP-dep_Trfase_small"/>
</dbReference>
<dbReference type="NCBIfam" id="NF003346">
    <property type="entry name" value="PRK04366.1"/>
    <property type="match status" value="1"/>
</dbReference>
<dbReference type="PANTHER" id="PTHR11773:SF1">
    <property type="entry name" value="GLYCINE DEHYDROGENASE (DECARBOXYLATING), MITOCHONDRIAL"/>
    <property type="match status" value="1"/>
</dbReference>
<dbReference type="PANTHER" id="PTHR11773">
    <property type="entry name" value="GLYCINE DEHYDROGENASE, DECARBOXYLATING"/>
    <property type="match status" value="1"/>
</dbReference>
<dbReference type="Pfam" id="PF21478">
    <property type="entry name" value="GcvP2_C"/>
    <property type="match status" value="1"/>
</dbReference>
<dbReference type="Pfam" id="PF02347">
    <property type="entry name" value="GDC-P"/>
    <property type="match status" value="1"/>
</dbReference>
<dbReference type="SUPFAM" id="SSF53383">
    <property type="entry name" value="PLP-dependent transferases"/>
    <property type="match status" value="1"/>
</dbReference>
<reference key="1">
    <citation type="journal article" date="2007" name="PLoS ONE">
        <title>Complete genomic characterization of a pathogenic A.II strain of Francisella tularensis subspecies tularensis.</title>
        <authorList>
            <person name="Beckstrom-Sternberg S.M."/>
            <person name="Auerbach R.K."/>
            <person name="Godbole S."/>
            <person name="Pearson J.V."/>
            <person name="Beckstrom-Sternberg J.S."/>
            <person name="Deng Z."/>
            <person name="Munk C."/>
            <person name="Kubota K."/>
            <person name="Zhou Y."/>
            <person name="Bruce D."/>
            <person name="Noronha J."/>
            <person name="Scheuermann R.H."/>
            <person name="Wang A."/>
            <person name="Wei X."/>
            <person name="Wang J."/>
            <person name="Hao J."/>
            <person name="Wagner D.M."/>
            <person name="Brettin T.S."/>
            <person name="Brown N."/>
            <person name="Gilna P."/>
            <person name="Keim P.S."/>
        </authorList>
    </citation>
    <scope>NUCLEOTIDE SEQUENCE [LARGE SCALE GENOMIC DNA]</scope>
    <source>
        <strain>WY96-3418</strain>
    </source>
</reference>
<feature type="chain" id="PRO_1000045692" description="Probable glycine dehydrogenase (decarboxylating) subunit 2">
    <location>
        <begin position="1"/>
        <end position="481"/>
    </location>
</feature>
<feature type="region of interest" description="Disordered" evidence="2">
    <location>
        <begin position="1"/>
        <end position="26"/>
    </location>
</feature>
<feature type="modified residue" description="N6-(pyridoxal phosphate)lysine" evidence="1">
    <location>
        <position position="263"/>
    </location>
</feature>
<keyword id="KW-0560">Oxidoreductase</keyword>
<keyword id="KW-0663">Pyridoxal phosphate</keyword>